<keyword id="KW-0131">Cell cycle</keyword>
<keyword id="KW-0132">Cell division</keyword>
<keyword id="KW-0342">GTP-binding</keyword>
<keyword id="KW-0460">Magnesium</keyword>
<keyword id="KW-0479">Metal-binding</keyword>
<keyword id="KW-0547">Nucleotide-binding</keyword>
<keyword id="KW-0717">Septation</keyword>
<proteinExistence type="inferred from homology"/>
<evidence type="ECO:0000255" key="1">
    <source>
        <dbReference type="HAMAP-Rule" id="MF_00321"/>
    </source>
</evidence>
<accession>C3K6T0</accession>
<gene>
    <name evidence="1" type="primary">engB</name>
    <name type="ordered locus">PFLU_0080</name>
</gene>
<organism>
    <name type="scientific">Pseudomonas fluorescens (strain SBW25)</name>
    <dbReference type="NCBI Taxonomy" id="216595"/>
    <lineage>
        <taxon>Bacteria</taxon>
        <taxon>Pseudomonadati</taxon>
        <taxon>Pseudomonadota</taxon>
        <taxon>Gammaproteobacteria</taxon>
        <taxon>Pseudomonadales</taxon>
        <taxon>Pseudomonadaceae</taxon>
        <taxon>Pseudomonas</taxon>
    </lineage>
</organism>
<name>ENGB_PSEFS</name>
<feature type="chain" id="PRO_1000205135" description="Probable GTP-binding protein EngB">
    <location>
        <begin position="1"/>
        <end position="213"/>
    </location>
</feature>
<feature type="domain" description="EngB-type G" evidence="1">
    <location>
        <begin position="30"/>
        <end position="204"/>
    </location>
</feature>
<feature type="binding site" evidence="1">
    <location>
        <begin position="38"/>
        <end position="45"/>
    </location>
    <ligand>
        <name>GTP</name>
        <dbReference type="ChEBI" id="CHEBI:37565"/>
    </ligand>
</feature>
<feature type="binding site" evidence="1">
    <location>
        <position position="45"/>
    </location>
    <ligand>
        <name>Mg(2+)</name>
        <dbReference type="ChEBI" id="CHEBI:18420"/>
    </ligand>
</feature>
<feature type="binding site" evidence="1">
    <location>
        <begin position="64"/>
        <end position="68"/>
    </location>
    <ligand>
        <name>GTP</name>
        <dbReference type="ChEBI" id="CHEBI:37565"/>
    </ligand>
</feature>
<feature type="binding site" evidence="1">
    <location>
        <position position="66"/>
    </location>
    <ligand>
        <name>Mg(2+)</name>
        <dbReference type="ChEBI" id="CHEBI:18420"/>
    </ligand>
</feature>
<feature type="binding site" evidence="1">
    <location>
        <begin position="82"/>
        <end position="85"/>
    </location>
    <ligand>
        <name>GTP</name>
        <dbReference type="ChEBI" id="CHEBI:37565"/>
    </ligand>
</feature>
<feature type="binding site" evidence="1">
    <location>
        <begin position="149"/>
        <end position="152"/>
    </location>
    <ligand>
        <name>GTP</name>
        <dbReference type="ChEBI" id="CHEBI:37565"/>
    </ligand>
</feature>
<feature type="binding site" evidence="1">
    <location>
        <begin position="182"/>
        <end position="185"/>
    </location>
    <ligand>
        <name>GTP</name>
        <dbReference type="ChEBI" id="CHEBI:37565"/>
    </ligand>
</feature>
<protein>
    <recommendedName>
        <fullName evidence="1">Probable GTP-binding protein EngB</fullName>
    </recommendedName>
</protein>
<sequence length="213" mass="23552">MQLKNPILGLCQQSTFMLSAAKVDQCPDDEGFEVAFAGRSNAGKSSALNTLTHASLARTSKTPGRTQLLNFFKLDDDRRLVDLPGYGYAKVPIPLKLHWQRHLEAYLGGRESLKGLILMMDIRHPMTDFDLLMLDWAVASGMPMHILLTKADKLTYGAAKNTLLKVQSEIRKGWGDAITIQLFSAPKRMGLEDAYTALAGWMELADKGAEIAE</sequence>
<reference key="1">
    <citation type="journal article" date="2009" name="Genome Biol.">
        <title>Genomic and genetic analyses of diversity and plant interactions of Pseudomonas fluorescens.</title>
        <authorList>
            <person name="Silby M.W."/>
            <person name="Cerdeno-Tarraga A.M."/>
            <person name="Vernikos G.S."/>
            <person name="Giddens S.R."/>
            <person name="Jackson R.W."/>
            <person name="Preston G.M."/>
            <person name="Zhang X.-X."/>
            <person name="Moon C.D."/>
            <person name="Gehrig S.M."/>
            <person name="Godfrey S.A.C."/>
            <person name="Knight C.G."/>
            <person name="Malone J.G."/>
            <person name="Robinson Z."/>
            <person name="Spiers A.J."/>
            <person name="Harris S."/>
            <person name="Challis G.L."/>
            <person name="Yaxley A.M."/>
            <person name="Harris D."/>
            <person name="Seeger K."/>
            <person name="Murphy L."/>
            <person name="Rutter S."/>
            <person name="Squares R."/>
            <person name="Quail M.A."/>
            <person name="Saunders E."/>
            <person name="Mavromatis K."/>
            <person name="Brettin T.S."/>
            <person name="Bentley S.D."/>
            <person name="Hothersall J."/>
            <person name="Stephens E."/>
            <person name="Thomas C.M."/>
            <person name="Parkhill J."/>
            <person name="Levy S.B."/>
            <person name="Rainey P.B."/>
            <person name="Thomson N.R."/>
        </authorList>
    </citation>
    <scope>NUCLEOTIDE SEQUENCE [LARGE SCALE GENOMIC DNA]</scope>
    <source>
        <strain>SBW25</strain>
    </source>
</reference>
<dbReference type="EMBL" id="AM181176">
    <property type="protein sequence ID" value="CAY46365.1"/>
    <property type="molecule type" value="Genomic_DNA"/>
</dbReference>
<dbReference type="SMR" id="C3K6T0"/>
<dbReference type="STRING" id="294.SRM1_00114"/>
<dbReference type="PATRIC" id="fig|216595.4.peg.323"/>
<dbReference type="eggNOG" id="COG0218">
    <property type="taxonomic scope" value="Bacteria"/>
</dbReference>
<dbReference type="HOGENOM" id="CLU_033732_1_0_6"/>
<dbReference type="OrthoDB" id="9804921at2"/>
<dbReference type="GO" id="GO:0005829">
    <property type="term" value="C:cytosol"/>
    <property type="evidence" value="ECO:0007669"/>
    <property type="project" value="TreeGrafter"/>
</dbReference>
<dbReference type="GO" id="GO:0005525">
    <property type="term" value="F:GTP binding"/>
    <property type="evidence" value="ECO:0007669"/>
    <property type="project" value="UniProtKB-UniRule"/>
</dbReference>
<dbReference type="GO" id="GO:0046872">
    <property type="term" value="F:metal ion binding"/>
    <property type="evidence" value="ECO:0007669"/>
    <property type="project" value="UniProtKB-KW"/>
</dbReference>
<dbReference type="GO" id="GO:0000917">
    <property type="term" value="P:division septum assembly"/>
    <property type="evidence" value="ECO:0007669"/>
    <property type="project" value="UniProtKB-KW"/>
</dbReference>
<dbReference type="CDD" id="cd01876">
    <property type="entry name" value="YihA_EngB"/>
    <property type="match status" value="1"/>
</dbReference>
<dbReference type="FunFam" id="3.40.50.300:FF:000098">
    <property type="entry name" value="Probable GTP-binding protein EngB"/>
    <property type="match status" value="1"/>
</dbReference>
<dbReference type="Gene3D" id="3.40.50.300">
    <property type="entry name" value="P-loop containing nucleotide triphosphate hydrolases"/>
    <property type="match status" value="1"/>
</dbReference>
<dbReference type="HAMAP" id="MF_00321">
    <property type="entry name" value="GTPase_EngB"/>
    <property type="match status" value="1"/>
</dbReference>
<dbReference type="InterPro" id="IPR030393">
    <property type="entry name" value="G_ENGB_dom"/>
</dbReference>
<dbReference type="InterPro" id="IPR006073">
    <property type="entry name" value="GTP-bd"/>
</dbReference>
<dbReference type="InterPro" id="IPR019987">
    <property type="entry name" value="GTP-bd_ribosome_bio_YsxC"/>
</dbReference>
<dbReference type="InterPro" id="IPR027417">
    <property type="entry name" value="P-loop_NTPase"/>
</dbReference>
<dbReference type="NCBIfam" id="TIGR03598">
    <property type="entry name" value="GTPase_YsxC"/>
    <property type="match status" value="1"/>
</dbReference>
<dbReference type="PANTHER" id="PTHR11649:SF13">
    <property type="entry name" value="ENGB-TYPE G DOMAIN-CONTAINING PROTEIN"/>
    <property type="match status" value="1"/>
</dbReference>
<dbReference type="PANTHER" id="PTHR11649">
    <property type="entry name" value="MSS1/TRME-RELATED GTP-BINDING PROTEIN"/>
    <property type="match status" value="1"/>
</dbReference>
<dbReference type="Pfam" id="PF01926">
    <property type="entry name" value="MMR_HSR1"/>
    <property type="match status" value="1"/>
</dbReference>
<dbReference type="SUPFAM" id="SSF52540">
    <property type="entry name" value="P-loop containing nucleoside triphosphate hydrolases"/>
    <property type="match status" value="1"/>
</dbReference>
<dbReference type="PROSITE" id="PS51706">
    <property type="entry name" value="G_ENGB"/>
    <property type="match status" value="1"/>
</dbReference>
<comment type="function">
    <text evidence="1">Necessary for normal cell division and for the maintenance of normal septation.</text>
</comment>
<comment type="cofactor">
    <cofactor evidence="1">
        <name>Mg(2+)</name>
        <dbReference type="ChEBI" id="CHEBI:18420"/>
    </cofactor>
</comment>
<comment type="similarity">
    <text evidence="1">Belongs to the TRAFAC class TrmE-Era-EngA-EngB-Septin-like GTPase superfamily. EngB GTPase family.</text>
</comment>